<feature type="chain" id="PRO_1000052587" description="Large ribosomal subunit protein uL22">
    <location>
        <begin position="1"/>
        <end position="110"/>
    </location>
</feature>
<keyword id="KW-0687">Ribonucleoprotein</keyword>
<keyword id="KW-0689">Ribosomal protein</keyword>
<keyword id="KW-0694">RNA-binding</keyword>
<keyword id="KW-0699">rRNA-binding</keyword>
<protein>
    <recommendedName>
        <fullName evidence="1">Large ribosomal subunit protein uL22</fullName>
    </recommendedName>
    <alternativeName>
        <fullName evidence="2">50S ribosomal protein L22</fullName>
    </alternativeName>
</protein>
<organism>
    <name type="scientific">Klebsiella pneumoniae subsp. pneumoniae (strain ATCC 700721 / MGH 78578)</name>
    <dbReference type="NCBI Taxonomy" id="272620"/>
    <lineage>
        <taxon>Bacteria</taxon>
        <taxon>Pseudomonadati</taxon>
        <taxon>Pseudomonadota</taxon>
        <taxon>Gammaproteobacteria</taxon>
        <taxon>Enterobacterales</taxon>
        <taxon>Enterobacteriaceae</taxon>
        <taxon>Klebsiella/Raoultella group</taxon>
        <taxon>Klebsiella</taxon>
        <taxon>Klebsiella pneumoniae complex</taxon>
    </lineage>
</organism>
<comment type="function">
    <text evidence="1">This protein binds specifically to 23S rRNA; its binding is stimulated by other ribosomal proteins, e.g. L4, L17, and L20. It is important during the early stages of 50S assembly. It makes multiple contacts with different domains of the 23S rRNA in the assembled 50S subunit and ribosome (By similarity).</text>
</comment>
<comment type="function">
    <text evidence="1">The globular domain of the protein is located near the polypeptide exit tunnel on the outside of the subunit, while an extended beta-hairpin is found that lines the wall of the exit tunnel in the center of the 70S ribosome.</text>
</comment>
<comment type="subunit">
    <text evidence="1">Part of the 50S ribosomal subunit.</text>
</comment>
<comment type="similarity">
    <text evidence="1">Belongs to the universal ribosomal protein uL22 family.</text>
</comment>
<accession>A6TEW7</accession>
<sequence length="110" mass="12196">METLAQHRHARSSAQKVRLVADLIRGKKVSQALDILTYTNKKAAVLVKKVLESAIANAEHNDGADIDDLKVAKIFVDEGPSMKRIMPRAKGRADRILKRTSHITVVVSDR</sequence>
<evidence type="ECO:0000255" key="1">
    <source>
        <dbReference type="HAMAP-Rule" id="MF_01331"/>
    </source>
</evidence>
<evidence type="ECO:0000305" key="2"/>
<dbReference type="EMBL" id="CP000647">
    <property type="protein sequence ID" value="ABR79101.1"/>
    <property type="molecule type" value="Genomic_DNA"/>
</dbReference>
<dbReference type="RefSeq" id="WP_002919773.1">
    <property type="nucleotide sequence ID" value="NC_009648.1"/>
</dbReference>
<dbReference type="SMR" id="A6TEW7"/>
<dbReference type="STRING" id="272620.KPN_03714"/>
<dbReference type="jPOST" id="A6TEW7"/>
<dbReference type="PaxDb" id="272620-KPN_03714"/>
<dbReference type="EnsemblBacteria" id="ABR79101">
    <property type="protein sequence ID" value="ABR79101"/>
    <property type="gene ID" value="KPN_03714"/>
</dbReference>
<dbReference type="GeneID" id="97603664"/>
<dbReference type="KEGG" id="kpn:KPN_03714"/>
<dbReference type="HOGENOM" id="CLU_083987_3_3_6"/>
<dbReference type="Proteomes" id="UP000000265">
    <property type="component" value="Chromosome"/>
</dbReference>
<dbReference type="GO" id="GO:0022625">
    <property type="term" value="C:cytosolic large ribosomal subunit"/>
    <property type="evidence" value="ECO:0007669"/>
    <property type="project" value="TreeGrafter"/>
</dbReference>
<dbReference type="GO" id="GO:0019843">
    <property type="term" value="F:rRNA binding"/>
    <property type="evidence" value="ECO:0007669"/>
    <property type="project" value="UniProtKB-UniRule"/>
</dbReference>
<dbReference type="GO" id="GO:0003735">
    <property type="term" value="F:structural constituent of ribosome"/>
    <property type="evidence" value="ECO:0007669"/>
    <property type="project" value="InterPro"/>
</dbReference>
<dbReference type="GO" id="GO:0006412">
    <property type="term" value="P:translation"/>
    <property type="evidence" value="ECO:0007669"/>
    <property type="project" value="UniProtKB-UniRule"/>
</dbReference>
<dbReference type="CDD" id="cd00336">
    <property type="entry name" value="Ribosomal_L22"/>
    <property type="match status" value="1"/>
</dbReference>
<dbReference type="FunFam" id="3.90.470.10:FF:000001">
    <property type="entry name" value="50S ribosomal protein L22"/>
    <property type="match status" value="1"/>
</dbReference>
<dbReference type="Gene3D" id="3.90.470.10">
    <property type="entry name" value="Ribosomal protein L22/L17"/>
    <property type="match status" value="1"/>
</dbReference>
<dbReference type="HAMAP" id="MF_01331_B">
    <property type="entry name" value="Ribosomal_uL22_B"/>
    <property type="match status" value="1"/>
</dbReference>
<dbReference type="InterPro" id="IPR001063">
    <property type="entry name" value="Ribosomal_uL22"/>
</dbReference>
<dbReference type="InterPro" id="IPR005727">
    <property type="entry name" value="Ribosomal_uL22_bac/chlpt-type"/>
</dbReference>
<dbReference type="InterPro" id="IPR047867">
    <property type="entry name" value="Ribosomal_uL22_bac/org-type"/>
</dbReference>
<dbReference type="InterPro" id="IPR018260">
    <property type="entry name" value="Ribosomal_uL22_CS"/>
</dbReference>
<dbReference type="InterPro" id="IPR036394">
    <property type="entry name" value="Ribosomal_uL22_sf"/>
</dbReference>
<dbReference type="NCBIfam" id="TIGR01044">
    <property type="entry name" value="rplV_bact"/>
    <property type="match status" value="1"/>
</dbReference>
<dbReference type="PANTHER" id="PTHR13501">
    <property type="entry name" value="CHLOROPLAST 50S RIBOSOMAL PROTEIN L22-RELATED"/>
    <property type="match status" value="1"/>
</dbReference>
<dbReference type="PANTHER" id="PTHR13501:SF8">
    <property type="entry name" value="LARGE RIBOSOMAL SUBUNIT PROTEIN UL22M"/>
    <property type="match status" value="1"/>
</dbReference>
<dbReference type="Pfam" id="PF00237">
    <property type="entry name" value="Ribosomal_L22"/>
    <property type="match status" value="1"/>
</dbReference>
<dbReference type="SUPFAM" id="SSF54843">
    <property type="entry name" value="Ribosomal protein L22"/>
    <property type="match status" value="1"/>
</dbReference>
<dbReference type="PROSITE" id="PS00464">
    <property type="entry name" value="RIBOSOMAL_L22"/>
    <property type="match status" value="1"/>
</dbReference>
<proteinExistence type="inferred from homology"/>
<gene>
    <name evidence="1" type="primary">rplV</name>
    <name type="ordered locus">KPN78578_36770</name>
    <name type="ORF">KPN_03714</name>
</gene>
<name>RL22_KLEP7</name>
<reference key="1">
    <citation type="submission" date="2006-09" db="EMBL/GenBank/DDBJ databases">
        <authorList>
            <consortium name="The Klebsiella pneumonia Genome Sequencing Project"/>
            <person name="McClelland M."/>
            <person name="Sanderson E.K."/>
            <person name="Spieth J."/>
            <person name="Clifton W.S."/>
            <person name="Latreille P."/>
            <person name="Sabo A."/>
            <person name="Pepin K."/>
            <person name="Bhonagiri V."/>
            <person name="Porwollik S."/>
            <person name="Ali J."/>
            <person name="Wilson R.K."/>
        </authorList>
    </citation>
    <scope>NUCLEOTIDE SEQUENCE [LARGE SCALE GENOMIC DNA]</scope>
    <source>
        <strain>ATCC 700721 / MGH 78578</strain>
    </source>
</reference>